<proteinExistence type="inferred from homology"/>
<accession>P0C438</accession>
<accession>P12137</accession>
<accession>Q6QY49</accession>
<dbReference type="EMBL" id="AY522331">
    <property type="status" value="NOT_ANNOTATED_CDS"/>
    <property type="molecule type" value="Genomic_DNA"/>
</dbReference>
<dbReference type="RefSeq" id="YP_009305340.1">
    <property type="nucleotide sequence ID" value="NC_031333.1"/>
</dbReference>
<dbReference type="SMR" id="P0C438"/>
<dbReference type="GeneID" id="29141408"/>
<dbReference type="ExpressionAtlas" id="P0C438">
    <property type="expression patterns" value="baseline and differential"/>
</dbReference>
<dbReference type="GO" id="GO:0009507">
    <property type="term" value="C:chloroplast"/>
    <property type="evidence" value="ECO:0007669"/>
    <property type="project" value="UniProtKB-SubCell"/>
</dbReference>
<dbReference type="GO" id="GO:0022625">
    <property type="term" value="C:cytosolic large ribosomal subunit"/>
    <property type="evidence" value="ECO:0007669"/>
    <property type="project" value="TreeGrafter"/>
</dbReference>
<dbReference type="GO" id="GO:0009536">
    <property type="term" value="C:plastid"/>
    <property type="evidence" value="ECO:0000305"/>
    <property type="project" value="Gramene"/>
</dbReference>
<dbReference type="GO" id="GO:0070180">
    <property type="term" value="F:large ribosomal subunit rRNA binding"/>
    <property type="evidence" value="ECO:0007669"/>
    <property type="project" value="TreeGrafter"/>
</dbReference>
<dbReference type="GO" id="GO:0003735">
    <property type="term" value="F:structural constituent of ribosome"/>
    <property type="evidence" value="ECO:0007669"/>
    <property type="project" value="InterPro"/>
</dbReference>
<dbReference type="GO" id="GO:0006412">
    <property type="term" value="P:translation"/>
    <property type="evidence" value="ECO:0007669"/>
    <property type="project" value="UniProtKB-UniRule"/>
</dbReference>
<dbReference type="CDD" id="cd00337">
    <property type="entry name" value="Ribosomal_uL14"/>
    <property type="match status" value="1"/>
</dbReference>
<dbReference type="FunFam" id="2.40.150.20:FF:000002">
    <property type="entry name" value="50S ribosomal protein L14, chloroplastic"/>
    <property type="match status" value="1"/>
</dbReference>
<dbReference type="Gene3D" id="2.40.150.20">
    <property type="entry name" value="Ribosomal protein L14"/>
    <property type="match status" value="1"/>
</dbReference>
<dbReference type="HAMAP" id="MF_01367">
    <property type="entry name" value="Ribosomal_uL14"/>
    <property type="match status" value="1"/>
</dbReference>
<dbReference type="InterPro" id="IPR000218">
    <property type="entry name" value="Ribosomal_uL14"/>
</dbReference>
<dbReference type="InterPro" id="IPR005745">
    <property type="entry name" value="Ribosomal_uL14_bac-type"/>
</dbReference>
<dbReference type="InterPro" id="IPR019972">
    <property type="entry name" value="Ribosomal_uL14_CS"/>
</dbReference>
<dbReference type="InterPro" id="IPR036853">
    <property type="entry name" value="Ribosomal_uL14_sf"/>
</dbReference>
<dbReference type="NCBIfam" id="TIGR01067">
    <property type="entry name" value="rplN_bact"/>
    <property type="match status" value="1"/>
</dbReference>
<dbReference type="PANTHER" id="PTHR11761">
    <property type="entry name" value="50S/60S RIBOSOMAL PROTEIN L14/L23"/>
    <property type="match status" value="1"/>
</dbReference>
<dbReference type="PANTHER" id="PTHR11761:SF3">
    <property type="entry name" value="LARGE RIBOSOMAL SUBUNIT PROTEIN UL14M"/>
    <property type="match status" value="1"/>
</dbReference>
<dbReference type="Pfam" id="PF00238">
    <property type="entry name" value="Ribosomal_L14"/>
    <property type="match status" value="1"/>
</dbReference>
<dbReference type="SMART" id="SM01374">
    <property type="entry name" value="Ribosomal_L14"/>
    <property type="match status" value="1"/>
</dbReference>
<dbReference type="SUPFAM" id="SSF50193">
    <property type="entry name" value="Ribosomal protein L14"/>
    <property type="match status" value="1"/>
</dbReference>
<dbReference type="PROSITE" id="PS00049">
    <property type="entry name" value="RIBOSOMAL_L14"/>
    <property type="match status" value="1"/>
</dbReference>
<protein>
    <recommendedName>
        <fullName evidence="1">Large ribosomal subunit protein uL14c</fullName>
    </recommendedName>
    <alternativeName>
        <fullName evidence="2">50S ribosomal protein L14, chloroplastic</fullName>
    </alternativeName>
</protein>
<reference key="1">
    <citation type="journal article" date="2004" name="Plant Physiol.">
        <title>A comparison of rice chloroplast genomes.</title>
        <authorList>
            <person name="Tang J."/>
            <person name="Xia H."/>
            <person name="Cao M."/>
            <person name="Zhang X."/>
            <person name="Zeng W."/>
            <person name="Hu S."/>
            <person name="Tong W."/>
            <person name="Wang J."/>
            <person name="Wang J."/>
            <person name="Yu J."/>
            <person name="Yang H."/>
            <person name="Zhu L."/>
        </authorList>
    </citation>
    <scope>NUCLEOTIDE SEQUENCE [LARGE SCALE GENOMIC DNA]</scope>
    <source>
        <strain>cv. PA64s</strain>
    </source>
</reference>
<keyword id="KW-0150">Chloroplast</keyword>
<keyword id="KW-0934">Plastid</keyword>
<keyword id="KW-0687">Ribonucleoprotein</keyword>
<keyword id="KW-0689">Ribosomal protein</keyword>
<keyword id="KW-0694">RNA-binding</keyword>
<keyword id="KW-0699">rRNA-binding</keyword>
<name>RK14_ORYSA</name>
<feature type="chain" id="PRO_0000128597" description="Large ribosomal subunit protein uL14c">
    <location>
        <begin position="1"/>
        <end position="123"/>
    </location>
</feature>
<gene>
    <name evidence="1" type="primary">rpl14</name>
</gene>
<sequence>MIQPQTLLNVADNSGARKLMCIRVIGAASNQRYARIGDVIVAVIKDAVPQMPLERSEVIRAVIVRTCKEFKCEDGIIIRYDDNAAVIIDQKGNPKGTRVFGAIAEELRELNFTKIVSLAPEVL</sequence>
<organism>
    <name type="scientific">Oryza sativa</name>
    <name type="common">Rice</name>
    <dbReference type="NCBI Taxonomy" id="4530"/>
    <lineage>
        <taxon>Eukaryota</taxon>
        <taxon>Viridiplantae</taxon>
        <taxon>Streptophyta</taxon>
        <taxon>Embryophyta</taxon>
        <taxon>Tracheophyta</taxon>
        <taxon>Spermatophyta</taxon>
        <taxon>Magnoliopsida</taxon>
        <taxon>Liliopsida</taxon>
        <taxon>Poales</taxon>
        <taxon>Poaceae</taxon>
        <taxon>BOP clade</taxon>
        <taxon>Oryzoideae</taxon>
        <taxon>Oryzeae</taxon>
        <taxon>Oryzinae</taxon>
        <taxon>Oryza</taxon>
    </lineage>
</organism>
<evidence type="ECO:0000255" key="1">
    <source>
        <dbReference type="HAMAP-Rule" id="MF_01367"/>
    </source>
</evidence>
<evidence type="ECO:0000305" key="2"/>
<comment type="function">
    <text evidence="1">Binds to 23S rRNA.</text>
</comment>
<comment type="subunit">
    <text evidence="1">Part of the 50S ribosomal subunit.</text>
</comment>
<comment type="subcellular location">
    <subcellularLocation>
        <location>Plastid</location>
        <location>Chloroplast</location>
    </subcellularLocation>
</comment>
<comment type="similarity">
    <text evidence="1">Belongs to the universal ribosomal protein uL14 family.</text>
</comment>
<geneLocation type="chloroplast"/>